<protein>
    <recommendedName>
        <fullName evidence="1">Elongation factor P</fullName>
        <shortName evidence="1">EF-P</shortName>
    </recommendedName>
</protein>
<proteinExistence type="inferred from homology"/>
<organism>
    <name type="scientific">Rhodopirellula baltica (strain DSM 10527 / NCIMB 13988 / SH1)</name>
    <dbReference type="NCBI Taxonomy" id="243090"/>
    <lineage>
        <taxon>Bacteria</taxon>
        <taxon>Pseudomonadati</taxon>
        <taxon>Planctomycetota</taxon>
        <taxon>Planctomycetia</taxon>
        <taxon>Pirellulales</taxon>
        <taxon>Pirellulaceae</taxon>
        <taxon>Rhodopirellula</taxon>
    </lineage>
</organism>
<accession>Q7UXN7</accession>
<evidence type="ECO:0000255" key="1">
    <source>
        <dbReference type="HAMAP-Rule" id="MF_00141"/>
    </source>
</evidence>
<dbReference type="EMBL" id="BX294135">
    <property type="protein sequence ID" value="CAD71969.1"/>
    <property type="molecule type" value="Genomic_DNA"/>
</dbReference>
<dbReference type="RefSeq" id="NP_864290.1">
    <property type="nucleotide sequence ID" value="NC_005027.1"/>
</dbReference>
<dbReference type="SMR" id="Q7UXN7"/>
<dbReference type="FunCoup" id="Q7UXN7">
    <property type="interactions" value="499"/>
</dbReference>
<dbReference type="STRING" id="243090.RB1213"/>
<dbReference type="EnsemblBacteria" id="CAD71969">
    <property type="protein sequence ID" value="CAD71969"/>
    <property type="gene ID" value="RB1213"/>
</dbReference>
<dbReference type="KEGG" id="rba:RB1213"/>
<dbReference type="PATRIC" id="fig|243090.15.peg.556"/>
<dbReference type="eggNOG" id="COG0231">
    <property type="taxonomic scope" value="Bacteria"/>
</dbReference>
<dbReference type="HOGENOM" id="CLU_074944_0_1_0"/>
<dbReference type="InParanoid" id="Q7UXN7"/>
<dbReference type="OrthoDB" id="9801844at2"/>
<dbReference type="UniPathway" id="UPA00345"/>
<dbReference type="Proteomes" id="UP000001025">
    <property type="component" value="Chromosome"/>
</dbReference>
<dbReference type="GO" id="GO:0005737">
    <property type="term" value="C:cytoplasm"/>
    <property type="evidence" value="ECO:0000318"/>
    <property type="project" value="GO_Central"/>
</dbReference>
<dbReference type="GO" id="GO:0003746">
    <property type="term" value="F:translation elongation factor activity"/>
    <property type="evidence" value="ECO:0000318"/>
    <property type="project" value="GO_Central"/>
</dbReference>
<dbReference type="GO" id="GO:0043043">
    <property type="term" value="P:peptide biosynthetic process"/>
    <property type="evidence" value="ECO:0007669"/>
    <property type="project" value="InterPro"/>
</dbReference>
<dbReference type="CDD" id="cd04470">
    <property type="entry name" value="S1_EF-P_repeat_1"/>
    <property type="match status" value="1"/>
</dbReference>
<dbReference type="CDD" id="cd05794">
    <property type="entry name" value="S1_EF-P_repeat_2"/>
    <property type="match status" value="1"/>
</dbReference>
<dbReference type="FunFam" id="2.30.30.30:FF:000003">
    <property type="entry name" value="Elongation factor P"/>
    <property type="match status" value="1"/>
</dbReference>
<dbReference type="FunFam" id="2.40.50.140:FF:000004">
    <property type="entry name" value="Elongation factor P"/>
    <property type="match status" value="1"/>
</dbReference>
<dbReference type="FunFam" id="2.40.50.140:FF:000009">
    <property type="entry name" value="Elongation factor P"/>
    <property type="match status" value="1"/>
</dbReference>
<dbReference type="Gene3D" id="2.30.30.30">
    <property type="match status" value="1"/>
</dbReference>
<dbReference type="Gene3D" id="2.40.50.140">
    <property type="entry name" value="Nucleic acid-binding proteins"/>
    <property type="match status" value="2"/>
</dbReference>
<dbReference type="HAMAP" id="MF_00141">
    <property type="entry name" value="EF_P"/>
    <property type="match status" value="1"/>
</dbReference>
<dbReference type="InterPro" id="IPR015365">
    <property type="entry name" value="Elong-fact-P_C"/>
</dbReference>
<dbReference type="InterPro" id="IPR012340">
    <property type="entry name" value="NA-bd_OB-fold"/>
</dbReference>
<dbReference type="InterPro" id="IPR014722">
    <property type="entry name" value="Rib_uL2_dom2"/>
</dbReference>
<dbReference type="InterPro" id="IPR020599">
    <property type="entry name" value="Transl_elong_fac_P/YeiP"/>
</dbReference>
<dbReference type="InterPro" id="IPR013185">
    <property type="entry name" value="Transl_elong_KOW-like"/>
</dbReference>
<dbReference type="InterPro" id="IPR001059">
    <property type="entry name" value="Transl_elong_P/YeiP_cen"/>
</dbReference>
<dbReference type="InterPro" id="IPR011768">
    <property type="entry name" value="Transl_elongation_fac_P"/>
</dbReference>
<dbReference type="InterPro" id="IPR008991">
    <property type="entry name" value="Translation_prot_SH3-like_sf"/>
</dbReference>
<dbReference type="NCBIfam" id="TIGR00038">
    <property type="entry name" value="efp"/>
    <property type="match status" value="1"/>
</dbReference>
<dbReference type="NCBIfam" id="NF001810">
    <property type="entry name" value="PRK00529.1"/>
    <property type="match status" value="1"/>
</dbReference>
<dbReference type="PANTHER" id="PTHR30053">
    <property type="entry name" value="ELONGATION FACTOR P"/>
    <property type="match status" value="1"/>
</dbReference>
<dbReference type="PANTHER" id="PTHR30053:SF12">
    <property type="entry name" value="ELONGATION FACTOR P (EF-P) FAMILY PROTEIN"/>
    <property type="match status" value="1"/>
</dbReference>
<dbReference type="Pfam" id="PF01132">
    <property type="entry name" value="EFP"/>
    <property type="match status" value="1"/>
</dbReference>
<dbReference type="Pfam" id="PF08207">
    <property type="entry name" value="EFP_N"/>
    <property type="match status" value="1"/>
</dbReference>
<dbReference type="Pfam" id="PF09285">
    <property type="entry name" value="Elong-fact-P_C"/>
    <property type="match status" value="1"/>
</dbReference>
<dbReference type="PIRSF" id="PIRSF005901">
    <property type="entry name" value="EF-P"/>
    <property type="match status" value="1"/>
</dbReference>
<dbReference type="SMART" id="SM01185">
    <property type="entry name" value="EFP"/>
    <property type="match status" value="1"/>
</dbReference>
<dbReference type="SMART" id="SM00841">
    <property type="entry name" value="Elong-fact-P_C"/>
    <property type="match status" value="1"/>
</dbReference>
<dbReference type="SUPFAM" id="SSF50249">
    <property type="entry name" value="Nucleic acid-binding proteins"/>
    <property type="match status" value="2"/>
</dbReference>
<dbReference type="SUPFAM" id="SSF50104">
    <property type="entry name" value="Translation proteins SH3-like domain"/>
    <property type="match status" value="1"/>
</dbReference>
<keyword id="KW-0963">Cytoplasm</keyword>
<keyword id="KW-0251">Elongation factor</keyword>
<keyword id="KW-0648">Protein biosynthesis</keyword>
<keyword id="KW-1185">Reference proteome</keyword>
<feature type="chain" id="PRO_0000094317" description="Elongation factor P">
    <location>
        <begin position="1"/>
        <end position="195"/>
    </location>
</feature>
<sequence length="195" mass="21705">MIVEPTVATYNTSDFRKGLKVQIDGEPYLITEMNFVKPGKGNAMYKCKMKNLIRGTTLDRTYKGGDSLEAADVETTTVQFLYRQGQDYVFMDGTTFEQYEVPNEVAGDIWKYLKDGTECSMTLYNGAAIIVEPPQHVQLEVTECGPGTKGDTATNVTKPAMVETGAEFNVPGFIKEGNIIKINTLNNEYVERVNN</sequence>
<name>EFP_RHOBA</name>
<reference key="1">
    <citation type="journal article" date="2003" name="Proc. Natl. Acad. Sci. U.S.A.">
        <title>Complete genome sequence of the marine planctomycete Pirellula sp. strain 1.</title>
        <authorList>
            <person name="Gloeckner F.O."/>
            <person name="Kube M."/>
            <person name="Bauer M."/>
            <person name="Teeling H."/>
            <person name="Lombardot T."/>
            <person name="Ludwig W."/>
            <person name="Gade D."/>
            <person name="Beck A."/>
            <person name="Borzym K."/>
            <person name="Heitmann K."/>
            <person name="Rabus R."/>
            <person name="Schlesner H."/>
            <person name="Amann R."/>
            <person name="Reinhardt R."/>
        </authorList>
    </citation>
    <scope>NUCLEOTIDE SEQUENCE [LARGE SCALE GENOMIC DNA]</scope>
    <source>
        <strain>DSM 10527 / NCIMB 13988 / SH1</strain>
    </source>
</reference>
<comment type="function">
    <text evidence="1">Involved in peptide bond synthesis. Stimulates efficient translation and peptide-bond synthesis on native or reconstituted 70S ribosomes in vitro. Probably functions indirectly by altering the affinity of the ribosome for aminoacyl-tRNA, thus increasing their reactivity as acceptors for peptidyl transferase.</text>
</comment>
<comment type="pathway">
    <text evidence="1">Protein biosynthesis; polypeptide chain elongation.</text>
</comment>
<comment type="subcellular location">
    <subcellularLocation>
        <location evidence="1">Cytoplasm</location>
    </subcellularLocation>
</comment>
<comment type="similarity">
    <text evidence="1">Belongs to the elongation factor P family.</text>
</comment>
<gene>
    <name evidence="1" type="primary">efp</name>
    <name type="ordered locus">RB1213</name>
</gene>